<gene>
    <name type="primary">tir</name>
    <name type="synonym">espE</name>
</gene>
<evidence type="ECO:0000250" key="1"/>
<evidence type="ECO:0000255" key="2"/>
<evidence type="ECO:0000256" key="3">
    <source>
        <dbReference type="SAM" id="MobiDB-lite"/>
    </source>
</evidence>
<evidence type="ECO:0000305" key="4"/>
<feature type="chain" id="PRO_0000414054" description="Translocated intimin receptor Tir">
    <location>
        <begin position="1"/>
        <end position="558"/>
    </location>
</feature>
<feature type="topological domain" description="Cytoplasmic" evidence="2">
    <location>
        <begin position="1"/>
        <end position="230"/>
    </location>
</feature>
<feature type="transmembrane region" description="Helical" evidence="2">
    <location>
        <begin position="231"/>
        <end position="251"/>
    </location>
</feature>
<feature type="topological domain" description="Extracellular" evidence="2">
    <location>
        <begin position="252"/>
        <end position="362"/>
    </location>
</feature>
<feature type="transmembrane region" description="Helical" evidence="2">
    <location>
        <begin position="363"/>
        <end position="383"/>
    </location>
</feature>
<feature type="topological domain" description="Cytoplasmic" evidence="2">
    <location>
        <begin position="384"/>
        <end position="558"/>
    </location>
</feature>
<feature type="region of interest" description="Disordered" evidence="3">
    <location>
        <begin position="1"/>
        <end position="44"/>
    </location>
</feature>
<feature type="region of interest" description="Disordered" evidence="3">
    <location>
        <begin position="182"/>
        <end position="226"/>
    </location>
</feature>
<feature type="region of interest" description="Disordered" evidence="3">
    <location>
        <begin position="257"/>
        <end position="280"/>
    </location>
</feature>
<feature type="region of interest" description="Disordered" evidence="3">
    <location>
        <begin position="388"/>
        <end position="451"/>
    </location>
</feature>
<feature type="region of interest" description="Disordered" evidence="3">
    <location>
        <begin position="533"/>
        <end position="558"/>
    </location>
</feature>
<feature type="short sequence motif" description="Essential for actin pedestal formation" evidence="1">
    <location>
        <begin position="456"/>
        <end position="458"/>
    </location>
</feature>
<feature type="compositionally biased region" description="Basic and acidic residues" evidence="3">
    <location>
        <begin position="182"/>
        <end position="205"/>
    </location>
</feature>
<feature type="compositionally biased region" description="Low complexity" evidence="3">
    <location>
        <begin position="213"/>
        <end position="224"/>
    </location>
</feature>
<feature type="compositionally biased region" description="Low complexity" evidence="3">
    <location>
        <begin position="257"/>
        <end position="277"/>
    </location>
</feature>
<feature type="compositionally biased region" description="Low complexity" evidence="3">
    <location>
        <begin position="393"/>
        <end position="403"/>
    </location>
</feature>
<feature type="compositionally biased region" description="Polar residues" evidence="3">
    <location>
        <begin position="404"/>
        <end position="424"/>
    </location>
</feature>
<feature type="compositionally biased region" description="Low complexity" evidence="3">
    <location>
        <begin position="436"/>
        <end position="450"/>
    </location>
</feature>
<feature type="compositionally biased region" description="Polar residues" evidence="3">
    <location>
        <begin position="538"/>
        <end position="548"/>
    </location>
</feature>
<reference key="1">
    <citation type="journal article" date="2005" name="J. Clin. Microbiol.">
        <title>Distribution of tccP in clinical enterohemorrhagic and enteropathogenic Escherichia coli isolates.</title>
        <authorList>
            <person name="Garmendia J."/>
            <person name="Ren Z."/>
            <person name="Tennant S."/>
            <person name="Midolli Viera M.A."/>
            <person name="Chong Y."/>
            <person name="Whale A."/>
            <person name="Azzopardi K."/>
            <person name="Dahan S."/>
            <person name="Sircili M.P."/>
            <person name="Franzolin M.R."/>
            <person name="Trabulsi L.R."/>
            <person name="Phillips A."/>
            <person name="Gomes T.A."/>
            <person name="Xu J."/>
            <person name="Robins-Browne R."/>
            <person name="Frankel G."/>
        </authorList>
    </citation>
    <scope>NUCLEOTIDE SEQUENCE [GENOMIC DNA]</scope>
    <source>
        <strain>O55:H7 / CPG7</strain>
    </source>
</reference>
<keyword id="KW-1032">Host cell membrane</keyword>
<keyword id="KW-1043">Host membrane</keyword>
<keyword id="KW-0472">Membrane</keyword>
<keyword id="KW-0597">Phosphoprotein</keyword>
<keyword id="KW-0675">Receptor</keyword>
<keyword id="KW-0964">Secreted</keyword>
<keyword id="KW-0812">Transmembrane</keyword>
<keyword id="KW-1133">Transmembrane helix</keyword>
<keyword id="KW-0843">Virulence</keyword>
<dbReference type="EMBL" id="DQ007021">
    <property type="protein sequence ID" value="AAY25392.1"/>
    <property type="molecule type" value="Genomic_DNA"/>
</dbReference>
<dbReference type="RefSeq" id="WP_001301454.1">
    <property type="nucleotide sequence ID" value="NZ_VODI01000329.1"/>
</dbReference>
<dbReference type="SMR" id="P0DJ92"/>
<dbReference type="OMA" id="HDKGPLD"/>
<dbReference type="GO" id="GO:0005576">
    <property type="term" value="C:extracellular region"/>
    <property type="evidence" value="ECO:0007669"/>
    <property type="project" value="UniProtKB-SubCell"/>
</dbReference>
<dbReference type="GO" id="GO:0020002">
    <property type="term" value="C:host cell plasma membrane"/>
    <property type="evidence" value="ECO:0007669"/>
    <property type="project" value="UniProtKB-SubCell"/>
</dbReference>
<dbReference type="GO" id="GO:0016020">
    <property type="term" value="C:membrane"/>
    <property type="evidence" value="ECO:0007669"/>
    <property type="project" value="UniProtKB-KW"/>
</dbReference>
<dbReference type="Gene3D" id="4.10.820.10">
    <property type="entry name" value="Translocated intimin receptor, central domain"/>
    <property type="match status" value="1"/>
</dbReference>
<dbReference type="InterPro" id="IPR037003">
    <property type="entry name" value="Tir_central_sf"/>
</dbReference>
<dbReference type="InterPro" id="IPR022638">
    <property type="entry name" value="Transloc_intimin_rcpt"/>
</dbReference>
<dbReference type="InterPro" id="IPR022639">
    <property type="entry name" value="Transloc_intimin_rcpt_C"/>
</dbReference>
<dbReference type="InterPro" id="IPR003536">
    <property type="entry name" value="Transloc_intimin_rcpt_cen_dom"/>
</dbReference>
<dbReference type="InterPro" id="IPR022633">
    <property type="entry name" value="Transloc_intimin_rcpt_N"/>
</dbReference>
<dbReference type="NCBIfam" id="NF033637">
    <property type="entry name" value="transloc_TIR"/>
    <property type="match status" value="1"/>
</dbReference>
<dbReference type="Pfam" id="PF07489">
    <property type="entry name" value="Tir_receptor_C"/>
    <property type="match status" value="1"/>
</dbReference>
<dbReference type="Pfam" id="PF03549">
    <property type="entry name" value="Tir_receptor_M"/>
    <property type="match status" value="1"/>
</dbReference>
<dbReference type="Pfam" id="PF07490">
    <property type="entry name" value="Tir_receptor_N"/>
    <property type="match status" value="1"/>
</dbReference>
<dbReference type="PRINTS" id="PR01370">
    <property type="entry name" value="TRNSINTIMINR"/>
</dbReference>
<protein>
    <recommendedName>
        <fullName>Translocated intimin receptor Tir</fullName>
    </recommendedName>
    <alternativeName>
        <fullName>Secreted effector protein Tir</fullName>
    </alternativeName>
</protein>
<name>TIR3_ECOLX</name>
<organism>
    <name type="scientific">Escherichia coli</name>
    <dbReference type="NCBI Taxonomy" id="562"/>
    <lineage>
        <taxon>Bacteria</taxon>
        <taxon>Pseudomonadati</taxon>
        <taxon>Pseudomonadota</taxon>
        <taxon>Gammaproteobacteria</taxon>
        <taxon>Enterobacterales</taxon>
        <taxon>Enterobacteriaceae</taxon>
        <taxon>Escherichia</taxon>
    </lineage>
</organism>
<sequence length="558" mass="58022">MPIGNLGHNPNVNNSIPPAPPLPSQTDGAGGRGQLINSTGPLGSRALFTPVRNSMADSGDNRASDVPGLPVNPMRLAASEITLNDGFEVLHDHGPLDTLNRQIGSSVFRVETQEDGKHIAVGQRNGVETSVVLSDQEYARLQSIDPEGKDKFVFTGGRGGAGHAMVTVASDITEARQRILELLEPKGTGESKGAGESKGVGELRESNSGAENTTETQTSTSTSSLRSDPKLWLALGTVATGLIGLAATGIVQALALTPEPDSPTTTDPDAAASATETATRDQLTKEAFQNPDNQKVNIDELGNAIPSGVLKDDVVANIEEQAKAAGEEAKQQAIENNAQAQKKYDEQQAKRQEELKVSSGAGYGLSGALILGGGIGVAVTAALHRKNQPVEQTTTTTTTTTTTSARTVENKPANNTPAQGNVDTPGSEDTMESRRSSMASTSSTFFDTSSIGTVQNPYADVKTSLHDSQVPTSNSNTSVQNMGNTDSVVYSTIQHPPRDTTDNGARLLGNPSAGIQSTYARLALSGGLRHDMGGLTGGSNSAVNTSNNPPAPGSHRFV</sequence>
<comment type="function">
    <text evidence="1">Multifunctional protein that is required for efficient pedestal formation in host epithelial cells during infection. The extracellular region acts as a receptor for bacterial intimin, allowing the bacterium to attach tightly to the host-cell surface. Simultaneously, the intracellular region initiates a signaling cascade in the host cell, which leads to actin polymerization and formation of actin pedestals at the sites of bacterial adhesion (By similarity).</text>
</comment>
<comment type="subunit">
    <text evidence="1">Interacts with intimin and host proteins.</text>
</comment>
<comment type="subcellular location">
    <subcellularLocation>
        <location evidence="1">Secreted</location>
    </subcellularLocation>
    <subcellularLocation>
        <location evidence="1">Host cell membrane</location>
        <topology evidence="1">Multi-pass membrane protein</topology>
    </subcellularLocation>
    <text evidence="1">Secreted via the type III secretion system (T3SS). Released into the host cytoplasm via T3SS and then independently inserts into the plasma membrane from a cytoplasmic location. In host cells, localizes to the tip of the actin pedestal (By similarity).</text>
</comment>
<comment type="PTM">
    <text evidence="1">Phosphorylated by host kinases.</text>
</comment>
<comment type="similarity">
    <text evidence="4">Belongs to the Tir receptor family.</text>
</comment>
<accession>P0DJ92</accession>
<accession>Q9R396</accession>
<proteinExistence type="inferred from homology"/>